<proteinExistence type="inferred from homology"/>
<dbReference type="EC" id="3.1.1.106" evidence="1"/>
<dbReference type="EMBL" id="CP001894">
    <property type="protein sequence ID" value="ADO08003.1"/>
    <property type="molecule type" value="Genomic_DNA"/>
</dbReference>
<dbReference type="RefSeq" id="WP_013360008.1">
    <property type="nucleotide sequence ID" value="NC_014563.1"/>
</dbReference>
<dbReference type="SMR" id="E1PL40"/>
<dbReference type="KEGG" id="pva:Pvag_pPag20013"/>
<dbReference type="HOGENOM" id="CLU_046550_5_1_6"/>
<dbReference type="OrthoDB" id="6194521at2"/>
<dbReference type="GO" id="GO:0061463">
    <property type="term" value="F:O-acetyl-ADP-ribose deacetylase activity"/>
    <property type="evidence" value="ECO:0007669"/>
    <property type="project" value="UniProtKB-EC"/>
</dbReference>
<dbReference type="GO" id="GO:0001883">
    <property type="term" value="F:purine nucleoside binding"/>
    <property type="evidence" value="ECO:0007669"/>
    <property type="project" value="UniProtKB-UniRule"/>
</dbReference>
<dbReference type="GO" id="GO:0008428">
    <property type="term" value="F:ribonuclease inhibitor activity"/>
    <property type="evidence" value="ECO:0007669"/>
    <property type="project" value="UniProtKB-UniRule"/>
</dbReference>
<dbReference type="GO" id="GO:0042278">
    <property type="term" value="P:purine nucleoside metabolic process"/>
    <property type="evidence" value="ECO:0007669"/>
    <property type="project" value="UniProtKB-UniRule"/>
</dbReference>
<dbReference type="CDD" id="cd02908">
    <property type="entry name" value="Macro_OAADPr_deacetylase"/>
    <property type="match status" value="1"/>
</dbReference>
<dbReference type="Gene3D" id="3.40.220.10">
    <property type="entry name" value="Leucine Aminopeptidase, subunit E, domain 1"/>
    <property type="match status" value="1"/>
</dbReference>
<dbReference type="HAMAP" id="MF_01205">
    <property type="entry name" value="YmdB"/>
    <property type="match status" value="1"/>
</dbReference>
<dbReference type="InterPro" id="IPR002589">
    <property type="entry name" value="Macro_dom"/>
</dbReference>
<dbReference type="InterPro" id="IPR043472">
    <property type="entry name" value="Macro_dom-like"/>
</dbReference>
<dbReference type="InterPro" id="IPR024900">
    <property type="entry name" value="O-Ac-ADP-ribose_deAcase"/>
</dbReference>
<dbReference type="NCBIfam" id="NF001664">
    <property type="entry name" value="PRK00431.1-6"/>
    <property type="match status" value="1"/>
</dbReference>
<dbReference type="PANTHER" id="PTHR11106">
    <property type="entry name" value="GANGLIOSIDE INDUCED DIFFERENTIATION ASSOCIATED PROTEIN 2-RELATED"/>
    <property type="match status" value="1"/>
</dbReference>
<dbReference type="PANTHER" id="PTHR11106:SF27">
    <property type="entry name" value="MACRO DOMAIN-CONTAINING PROTEIN"/>
    <property type="match status" value="1"/>
</dbReference>
<dbReference type="Pfam" id="PF01661">
    <property type="entry name" value="Macro"/>
    <property type="match status" value="1"/>
</dbReference>
<dbReference type="SMART" id="SM00506">
    <property type="entry name" value="A1pp"/>
    <property type="match status" value="1"/>
</dbReference>
<dbReference type="SUPFAM" id="SSF52949">
    <property type="entry name" value="Macro domain-like"/>
    <property type="match status" value="1"/>
</dbReference>
<dbReference type="PROSITE" id="PS51154">
    <property type="entry name" value="MACRO"/>
    <property type="match status" value="1"/>
</dbReference>
<feature type="chain" id="PRO_0000409482" description="O-acetyl-ADP-ribose deacetylase 2">
    <location>
        <begin position="1"/>
        <end position="171"/>
    </location>
</feature>
<feature type="domain" description="Macro" evidence="1">
    <location>
        <begin position="1"/>
        <end position="171"/>
    </location>
</feature>
<feature type="active site" description="Proton acceptor" evidence="1">
    <location>
        <position position="34"/>
    </location>
</feature>
<feature type="binding site" evidence="1">
    <location>
        <begin position="10"/>
        <end position="11"/>
    </location>
    <ligand>
        <name>substrate</name>
    </ligand>
</feature>
<feature type="binding site" evidence="1">
    <location>
        <position position="24"/>
    </location>
    <ligand>
        <name>substrate</name>
    </ligand>
</feature>
<feature type="binding site" evidence="1">
    <location>
        <begin position="32"/>
        <end position="34"/>
    </location>
    <ligand>
        <name>substrate</name>
    </ligand>
</feature>
<feature type="binding site" evidence="1">
    <location>
        <begin position="121"/>
        <end position="125"/>
    </location>
    <ligand>
        <name>substrate</name>
    </ligand>
</feature>
<evidence type="ECO:0000255" key="1">
    <source>
        <dbReference type="HAMAP-Rule" id="MF_01205"/>
    </source>
</evidence>
<geneLocation type="plasmid">
    <name>pPag2</name>
</geneLocation>
<comment type="function">
    <text evidence="1">Deacetylates O-acetyl-ADP ribose to yield ADP-ribose and free acetate. Down-regulates ribonuclease 3 (RNase III) activity. Acts by interacting directly with the region of the ribonuclease that is required for dimerization/activation.</text>
</comment>
<comment type="catalytic activity">
    <reaction evidence="1">
        <text>3''-O-acetyl-ADP-D-ribose + H2O = ADP-D-ribose + acetate + H(+)</text>
        <dbReference type="Rhea" id="RHEA:59244"/>
        <dbReference type="ChEBI" id="CHEBI:15377"/>
        <dbReference type="ChEBI" id="CHEBI:15378"/>
        <dbReference type="ChEBI" id="CHEBI:30089"/>
        <dbReference type="ChEBI" id="CHEBI:57967"/>
        <dbReference type="ChEBI" id="CHEBI:142723"/>
        <dbReference type="EC" id="3.1.1.106"/>
    </reaction>
</comment>
<comment type="catalytic activity">
    <reaction evidence="1">
        <text>2''-O-acetyl-ADP-D-ribose + H2O = ADP-D-ribose + acetate + H(+)</text>
        <dbReference type="Rhea" id="RHEA:57060"/>
        <dbReference type="ChEBI" id="CHEBI:15377"/>
        <dbReference type="ChEBI" id="CHEBI:15378"/>
        <dbReference type="ChEBI" id="CHEBI:30089"/>
        <dbReference type="ChEBI" id="CHEBI:57967"/>
        <dbReference type="ChEBI" id="CHEBI:83767"/>
        <dbReference type="EC" id="3.1.1.106"/>
    </reaction>
</comment>
<comment type="subunit">
    <text evidence="1">Homodimer. Interacts with RNase III.</text>
</comment>
<comment type="similarity">
    <text evidence="1">Belongs to the MacroD-type family. YmdB subfamily.</text>
</comment>
<organism>
    <name type="scientific">Pantoea vagans (strain C9-1)</name>
    <name type="common">Pantoea agglomerans (strain C9-1)</name>
    <dbReference type="NCBI Taxonomy" id="712898"/>
    <lineage>
        <taxon>Bacteria</taxon>
        <taxon>Pseudomonadati</taxon>
        <taxon>Pseudomonadota</taxon>
        <taxon>Gammaproteobacteria</taxon>
        <taxon>Enterobacterales</taxon>
        <taxon>Erwiniaceae</taxon>
        <taxon>Pantoea</taxon>
    </lineage>
</organism>
<keyword id="KW-0378">Hydrolase</keyword>
<keyword id="KW-0614">Plasmid</keyword>
<reference key="1">
    <citation type="journal article" date="2010" name="J. Bacteriol.">
        <title>The genome sequence of the biocontrol agent Pantoea vagans strain C9-1.</title>
        <authorList>
            <person name="Smits T.H."/>
            <person name="Rezzonico F."/>
            <person name="Kamber T."/>
            <person name="Goesmann A."/>
            <person name="Ishimaru C.A."/>
            <person name="Stockwell V.O."/>
            <person name="Frey J.E."/>
            <person name="Duffy B."/>
        </authorList>
    </citation>
    <scope>NUCLEOTIDE SEQUENCE [LARGE SCALE GENOMIC DNA]</scope>
    <source>
        <strain>C9-1</strain>
    </source>
</reference>
<name>YMDB2_PANVC</name>
<protein>
    <recommendedName>
        <fullName evidence="1">O-acetyl-ADP-ribose deacetylase 2</fullName>
        <ecNumber evidence="1">3.1.1.106</ecNumber>
    </recommendedName>
    <alternativeName>
        <fullName evidence="1">Regulator of RNase III activity 2</fullName>
    </alternativeName>
</protein>
<accession>E1PL40</accession>
<gene>
    <name evidence="1" type="primary">ymdB2</name>
    <name type="ordered locus">Pvag_pPag20013</name>
</gene>
<sequence>MNKITVIQGDITNIASEAIINVANSSLLGGGGVDGAIHRAGGPVILAECQAIRSRQGGCKVGEAVITGAGTLPADYVIHTVGPRWSDGRHNEDTQLKSVYLSCFKLVGHHGIKTVSFPNISTGIYGFPKKRAAAIALDVIKHCIAENRTIEKVNLVCFDAENYDLYLKLLN</sequence>